<feature type="chain" id="PRO_0000188360" description="Glycerol-3-phosphate acyltransferase 2">
    <location>
        <begin position="1"/>
        <end position="195"/>
    </location>
</feature>
<feature type="transmembrane region" description="Helical" evidence="1">
    <location>
        <begin position="4"/>
        <end position="24"/>
    </location>
</feature>
<feature type="transmembrane region" description="Helical" evidence="1">
    <location>
        <begin position="52"/>
        <end position="72"/>
    </location>
</feature>
<feature type="transmembrane region" description="Helical" evidence="1">
    <location>
        <begin position="73"/>
        <end position="93"/>
    </location>
</feature>
<feature type="transmembrane region" description="Helical" evidence="1">
    <location>
        <begin position="115"/>
        <end position="135"/>
    </location>
</feature>
<feature type="transmembrane region" description="Helical" evidence="1">
    <location>
        <begin position="150"/>
        <end position="170"/>
    </location>
</feature>
<feature type="transmembrane region" description="Helical" evidence="1">
    <location>
        <begin position="171"/>
        <end position="191"/>
    </location>
</feature>
<accession>Q9RS57</accession>
<comment type="function">
    <text evidence="1">Catalyzes the transfer of an acyl group from acyl-phosphate (acyl-PO(4)) to glycerol-3-phosphate (G3P) to form lysophosphatidic acid (LPA). This enzyme utilizes acyl-phosphate as fatty acyl donor, but not acyl-CoA or acyl-ACP.</text>
</comment>
<comment type="catalytic activity">
    <reaction evidence="1">
        <text>an acyl phosphate + sn-glycerol 3-phosphate = a 1-acyl-sn-glycero-3-phosphate + phosphate</text>
        <dbReference type="Rhea" id="RHEA:34075"/>
        <dbReference type="ChEBI" id="CHEBI:43474"/>
        <dbReference type="ChEBI" id="CHEBI:57597"/>
        <dbReference type="ChEBI" id="CHEBI:57970"/>
        <dbReference type="ChEBI" id="CHEBI:59918"/>
        <dbReference type="EC" id="2.3.1.275"/>
    </reaction>
</comment>
<comment type="pathway">
    <text evidence="1">Lipid metabolism; phospholipid metabolism.</text>
</comment>
<comment type="subunit">
    <text evidence="1">Probably interacts with PlsX.</text>
</comment>
<comment type="subcellular location">
    <subcellularLocation>
        <location evidence="1">Cell membrane</location>
        <topology evidence="1">Multi-pass membrane protein</topology>
    </subcellularLocation>
</comment>
<comment type="similarity">
    <text evidence="1">Belongs to the PlsY family.</text>
</comment>
<reference key="1">
    <citation type="journal article" date="1999" name="Science">
        <title>Genome sequence of the radioresistant bacterium Deinococcus radiodurans R1.</title>
        <authorList>
            <person name="White O."/>
            <person name="Eisen J.A."/>
            <person name="Heidelberg J.F."/>
            <person name="Hickey E.K."/>
            <person name="Peterson J.D."/>
            <person name="Dodson R.J."/>
            <person name="Haft D.H."/>
            <person name="Gwinn M.L."/>
            <person name="Nelson W.C."/>
            <person name="Richardson D.L."/>
            <person name="Moffat K.S."/>
            <person name="Qin H."/>
            <person name="Jiang L."/>
            <person name="Pamphile W."/>
            <person name="Crosby M."/>
            <person name="Shen M."/>
            <person name="Vamathevan J.J."/>
            <person name="Lam P."/>
            <person name="McDonald L.A."/>
            <person name="Utterback T.R."/>
            <person name="Zalewski C."/>
            <person name="Makarova K.S."/>
            <person name="Aravind L."/>
            <person name="Daly M.J."/>
            <person name="Minton K.W."/>
            <person name="Fleischmann R.D."/>
            <person name="Ketchum K.A."/>
            <person name="Nelson K.E."/>
            <person name="Salzberg S.L."/>
            <person name="Smith H.O."/>
            <person name="Venter J.C."/>
            <person name="Fraser C.M."/>
        </authorList>
    </citation>
    <scope>NUCLEOTIDE SEQUENCE [LARGE SCALE GENOMIC DNA]</scope>
    <source>
        <strain>ATCC 13939 / DSM 20539 / JCM 16871 / CCUG 27074 / LMG 4051 / NBRC 15346 / NCIMB 9279 / VKM B-1422 / R1</strain>
    </source>
</reference>
<dbReference type="EC" id="2.3.1.275" evidence="1"/>
<dbReference type="EMBL" id="AE000513">
    <property type="protein sequence ID" value="AAF11816.1"/>
    <property type="molecule type" value="Genomic_DNA"/>
</dbReference>
<dbReference type="PIR" id="A75295">
    <property type="entry name" value="A75295"/>
</dbReference>
<dbReference type="RefSeq" id="NP_295991.1">
    <property type="nucleotide sequence ID" value="NC_001263.1"/>
</dbReference>
<dbReference type="RefSeq" id="WP_010888898.1">
    <property type="nucleotide sequence ID" value="NC_001263.1"/>
</dbReference>
<dbReference type="SMR" id="Q9RS57"/>
<dbReference type="STRING" id="243230.DR_2270"/>
<dbReference type="PaxDb" id="243230-DR_2270"/>
<dbReference type="EnsemblBacteria" id="AAF11816">
    <property type="protein sequence ID" value="AAF11816"/>
    <property type="gene ID" value="DR_2270"/>
</dbReference>
<dbReference type="GeneID" id="69518522"/>
<dbReference type="KEGG" id="dra:DR_2270"/>
<dbReference type="PATRIC" id="fig|243230.17.peg.2498"/>
<dbReference type="eggNOG" id="COG0344">
    <property type="taxonomic scope" value="Bacteria"/>
</dbReference>
<dbReference type="HOGENOM" id="CLU_081254_7_2_0"/>
<dbReference type="InParanoid" id="Q9RS57"/>
<dbReference type="OrthoDB" id="69230at2"/>
<dbReference type="UniPathway" id="UPA00085"/>
<dbReference type="Proteomes" id="UP000002524">
    <property type="component" value="Chromosome 1"/>
</dbReference>
<dbReference type="GO" id="GO:0005886">
    <property type="term" value="C:plasma membrane"/>
    <property type="evidence" value="ECO:0000318"/>
    <property type="project" value="GO_Central"/>
</dbReference>
<dbReference type="GO" id="GO:0043772">
    <property type="term" value="F:acyl-phosphate glycerol-3-phosphate acyltransferase activity"/>
    <property type="evidence" value="ECO:0007669"/>
    <property type="project" value="UniProtKB-UniRule"/>
</dbReference>
<dbReference type="GO" id="GO:0008654">
    <property type="term" value="P:phospholipid biosynthetic process"/>
    <property type="evidence" value="ECO:0007669"/>
    <property type="project" value="UniProtKB-UniRule"/>
</dbReference>
<dbReference type="HAMAP" id="MF_01043">
    <property type="entry name" value="PlsY"/>
    <property type="match status" value="1"/>
</dbReference>
<dbReference type="InterPro" id="IPR003811">
    <property type="entry name" value="G3P_acylTferase_PlsY"/>
</dbReference>
<dbReference type="NCBIfam" id="NF010978">
    <property type="entry name" value="PRK14401.1"/>
    <property type="match status" value="1"/>
</dbReference>
<dbReference type="PANTHER" id="PTHR30309:SF0">
    <property type="entry name" value="GLYCEROL-3-PHOSPHATE ACYLTRANSFERASE-RELATED"/>
    <property type="match status" value="1"/>
</dbReference>
<dbReference type="PANTHER" id="PTHR30309">
    <property type="entry name" value="INNER MEMBRANE PROTEIN YGIH"/>
    <property type="match status" value="1"/>
</dbReference>
<dbReference type="Pfam" id="PF02660">
    <property type="entry name" value="G3P_acyltransf"/>
    <property type="match status" value="1"/>
</dbReference>
<dbReference type="SMART" id="SM01207">
    <property type="entry name" value="G3P_acyltransf"/>
    <property type="match status" value="1"/>
</dbReference>
<evidence type="ECO:0000255" key="1">
    <source>
        <dbReference type="HAMAP-Rule" id="MF_01043"/>
    </source>
</evidence>
<gene>
    <name evidence="1" type="primary">plsY2</name>
    <name type="ordered locus">DR_2270</name>
</gene>
<organism>
    <name type="scientific">Deinococcus radiodurans (strain ATCC 13939 / DSM 20539 / JCM 16871 / CCUG 27074 / LMG 4051 / NBRC 15346 / NCIMB 9279 / VKM B-1422 / R1)</name>
    <dbReference type="NCBI Taxonomy" id="243230"/>
    <lineage>
        <taxon>Bacteria</taxon>
        <taxon>Thermotogati</taxon>
        <taxon>Deinococcota</taxon>
        <taxon>Deinococci</taxon>
        <taxon>Deinococcales</taxon>
        <taxon>Deinococcaceae</taxon>
        <taxon>Deinococcus</taxon>
    </lineage>
</organism>
<proteinExistence type="inferred from homology"/>
<keyword id="KW-1003">Cell membrane</keyword>
<keyword id="KW-0444">Lipid biosynthesis</keyword>
<keyword id="KW-0443">Lipid metabolism</keyword>
<keyword id="KW-0472">Membrane</keyword>
<keyword id="KW-0594">Phospholipid biosynthesis</keyword>
<keyword id="KW-1208">Phospholipid metabolism</keyword>
<keyword id="KW-1185">Reference proteome</keyword>
<keyword id="KW-0808">Transferase</keyword>
<keyword id="KW-0812">Transmembrane</keyword>
<keyword id="KW-1133">Transmembrane helix</keyword>
<name>PLSY2_DEIRA</name>
<protein>
    <recommendedName>
        <fullName evidence="1">Glycerol-3-phosphate acyltransferase 2</fullName>
    </recommendedName>
    <alternativeName>
        <fullName evidence="1">Acyl-PO4 G3P acyltransferase 2</fullName>
    </alternativeName>
    <alternativeName>
        <fullName evidence="1">Acyl-phosphate--glycerol-3-phosphate acyltransferase 2</fullName>
    </alternativeName>
    <alternativeName>
        <fullName evidence="1">G3P acyltransferase 2</fullName>
        <shortName evidence="1">GPAT 2</shortName>
        <ecNumber evidence="1">2.3.1.275</ecNumber>
    </alternativeName>
    <alternativeName>
        <fullName evidence="1">Lysophosphatidic acid synthase 2</fullName>
        <shortName evidence="1">LPA synthase 2</shortName>
    </alternativeName>
</protein>
<sequence>MRAVVSLAVVFVLSYLLGSLVAGVLYSRGRGEDIRGRDLPGGSGTYRQYGKGAAAAVTLADILKGAAAVGLALWLAPQALPLATALATFGVVFGHCYPVWFGFRGGGGIAPFLGAMLVVAPWTLLATVTFALALIPLYRATLQPRLRLNAIPFATVVAVPVGLLIASRLGGGAEFLAGSAAMGIRAVHLLAEQRA</sequence>